<evidence type="ECO:0000255" key="1">
    <source>
        <dbReference type="HAMAP-Rule" id="MF_00657"/>
    </source>
</evidence>
<proteinExistence type="inferred from homology"/>
<feature type="chain" id="PRO_1000061737" description="PKHD-type hydroxylase RPD_3334">
    <location>
        <begin position="1"/>
        <end position="229"/>
    </location>
</feature>
<feature type="domain" description="Fe2OG dioxygenase" evidence="1">
    <location>
        <begin position="78"/>
        <end position="180"/>
    </location>
</feature>
<feature type="binding site" evidence="1">
    <location>
        <position position="98"/>
    </location>
    <ligand>
        <name>Fe cation</name>
        <dbReference type="ChEBI" id="CHEBI:24875"/>
    </ligand>
</feature>
<feature type="binding site" evidence="1">
    <location>
        <position position="100"/>
    </location>
    <ligand>
        <name>Fe cation</name>
        <dbReference type="ChEBI" id="CHEBI:24875"/>
    </ligand>
</feature>
<feature type="binding site" evidence="1">
    <location>
        <position position="161"/>
    </location>
    <ligand>
        <name>Fe cation</name>
        <dbReference type="ChEBI" id="CHEBI:24875"/>
    </ligand>
</feature>
<feature type="binding site" evidence="1">
    <location>
        <position position="171"/>
    </location>
    <ligand>
        <name>2-oxoglutarate</name>
        <dbReference type="ChEBI" id="CHEBI:16810"/>
    </ligand>
</feature>
<accession>Q134D1</accession>
<name>Y3334_RHOPS</name>
<reference key="1">
    <citation type="submission" date="2006-03" db="EMBL/GenBank/DDBJ databases">
        <title>Complete sequence of Rhodopseudomonas palustris BisB5.</title>
        <authorList>
            <consortium name="US DOE Joint Genome Institute"/>
            <person name="Copeland A."/>
            <person name="Lucas S."/>
            <person name="Lapidus A."/>
            <person name="Barry K."/>
            <person name="Detter J.C."/>
            <person name="Glavina del Rio T."/>
            <person name="Hammon N."/>
            <person name="Israni S."/>
            <person name="Dalin E."/>
            <person name="Tice H."/>
            <person name="Pitluck S."/>
            <person name="Chain P."/>
            <person name="Malfatti S."/>
            <person name="Shin M."/>
            <person name="Vergez L."/>
            <person name="Schmutz J."/>
            <person name="Larimer F."/>
            <person name="Land M."/>
            <person name="Hauser L."/>
            <person name="Pelletier D.A."/>
            <person name="Kyrpides N."/>
            <person name="Lykidis A."/>
            <person name="Oda Y."/>
            <person name="Harwood C.S."/>
            <person name="Richardson P."/>
        </authorList>
    </citation>
    <scope>NUCLEOTIDE SEQUENCE [LARGE SCALE GENOMIC DNA]</scope>
    <source>
        <strain>BisB5</strain>
    </source>
</reference>
<gene>
    <name type="ordered locus">RPD_3334</name>
</gene>
<dbReference type="EC" id="1.14.11.-" evidence="1"/>
<dbReference type="EMBL" id="CP000283">
    <property type="protein sequence ID" value="ABE40558.1"/>
    <property type="molecule type" value="Genomic_DNA"/>
</dbReference>
<dbReference type="SMR" id="Q134D1"/>
<dbReference type="STRING" id="316057.RPD_3334"/>
<dbReference type="KEGG" id="rpd:RPD_3334"/>
<dbReference type="eggNOG" id="COG3128">
    <property type="taxonomic scope" value="Bacteria"/>
</dbReference>
<dbReference type="HOGENOM" id="CLU_106663_0_0_5"/>
<dbReference type="BioCyc" id="RPAL316057:RPD_RS16760-MONOMER"/>
<dbReference type="Proteomes" id="UP000001818">
    <property type="component" value="Chromosome"/>
</dbReference>
<dbReference type="GO" id="GO:0016706">
    <property type="term" value="F:2-oxoglutarate-dependent dioxygenase activity"/>
    <property type="evidence" value="ECO:0007669"/>
    <property type="project" value="UniProtKB-UniRule"/>
</dbReference>
<dbReference type="GO" id="GO:0005506">
    <property type="term" value="F:iron ion binding"/>
    <property type="evidence" value="ECO:0007669"/>
    <property type="project" value="UniProtKB-UniRule"/>
</dbReference>
<dbReference type="GO" id="GO:0031418">
    <property type="term" value="F:L-ascorbic acid binding"/>
    <property type="evidence" value="ECO:0007669"/>
    <property type="project" value="UniProtKB-KW"/>
</dbReference>
<dbReference type="GO" id="GO:0006974">
    <property type="term" value="P:DNA damage response"/>
    <property type="evidence" value="ECO:0007669"/>
    <property type="project" value="TreeGrafter"/>
</dbReference>
<dbReference type="GO" id="GO:0006879">
    <property type="term" value="P:intracellular iron ion homeostasis"/>
    <property type="evidence" value="ECO:0007669"/>
    <property type="project" value="TreeGrafter"/>
</dbReference>
<dbReference type="Gene3D" id="2.60.120.620">
    <property type="entry name" value="q2cbj1_9rhob like domain"/>
    <property type="match status" value="1"/>
</dbReference>
<dbReference type="Gene3D" id="4.10.860.20">
    <property type="entry name" value="Rabenosyn, Rab binding domain"/>
    <property type="match status" value="1"/>
</dbReference>
<dbReference type="HAMAP" id="MF_00657">
    <property type="entry name" value="Hydroxyl_YbiX"/>
    <property type="match status" value="1"/>
</dbReference>
<dbReference type="InterPro" id="IPR005123">
    <property type="entry name" value="Oxoglu/Fe-dep_dioxygenase_dom"/>
</dbReference>
<dbReference type="InterPro" id="IPR041097">
    <property type="entry name" value="PKHD_C"/>
</dbReference>
<dbReference type="InterPro" id="IPR023550">
    <property type="entry name" value="PKHD_hydroxylase"/>
</dbReference>
<dbReference type="InterPro" id="IPR006620">
    <property type="entry name" value="Pro_4_hyd_alph"/>
</dbReference>
<dbReference type="InterPro" id="IPR044862">
    <property type="entry name" value="Pro_4_hyd_alph_FE2OG_OXY"/>
</dbReference>
<dbReference type="NCBIfam" id="NF003973">
    <property type="entry name" value="PRK05467.1-2"/>
    <property type="match status" value="1"/>
</dbReference>
<dbReference type="NCBIfam" id="NF003974">
    <property type="entry name" value="PRK05467.1-3"/>
    <property type="match status" value="1"/>
</dbReference>
<dbReference type="NCBIfam" id="NF003975">
    <property type="entry name" value="PRK05467.1-4"/>
    <property type="match status" value="1"/>
</dbReference>
<dbReference type="PANTHER" id="PTHR41536">
    <property type="entry name" value="PKHD-TYPE HYDROXYLASE YBIX"/>
    <property type="match status" value="1"/>
</dbReference>
<dbReference type="PANTHER" id="PTHR41536:SF1">
    <property type="entry name" value="PKHD-TYPE HYDROXYLASE YBIX"/>
    <property type="match status" value="1"/>
</dbReference>
<dbReference type="Pfam" id="PF13640">
    <property type="entry name" value="2OG-FeII_Oxy_3"/>
    <property type="match status" value="1"/>
</dbReference>
<dbReference type="Pfam" id="PF18331">
    <property type="entry name" value="PKHD_C"/>
    <property type="match status" value="1"/>
</dbReference>
<dbReference type="SMART" id="SM00702">
    <property type="entry name" value="P4Hc"/>
    <property type="match status" value="1"/>
</dbReference>
<dbReference type="PROSITE" id="PS51471">
    <property type="entry name" value="FE2OG_OXY"/>
    <property type="match status" value="1"/>
</dbReference>
<sequence>MLVCIPEILSKHEVTEFRRLMDQADWEDGRSTAGAQSAMVKRNEQLPPDSELARMLGRRIVSALTANPKFVSAAVPLQIFPPLFNRYAASGNHHFGIHVDNAVRGDPLTGLRIRTDLSVTLFLAEPDEYDGGELVVEDTYGSHEVKLPAGDCVLYPSSSLHMVTPVTRGARVASFFWLQSMIRDAHARSMIYDLDGAIQALVERLGRDDPETVKLTGIYHNLIRYWADV</sequence>
<organism>
    <name type="scientific">Rhodopseudomonas palustris (strain BisB5)</name>
    <dbReference type="NCBI Taxonomy" id="316057"/>
    <lineage>
        <taxon>Bacteria</taxon>
        <taxon>Pseudomonadati</taxon>
        <taxon>Pseudomonadota</taxon>
        <taxon>Alphaproteobacteria</taxon>
        <taxon>Hyphomicrobiales</taxon>
        <taxon>Nitrobacteraceae</taxon>
        <taxon>Rhodopseudomonas</taxon>
    </lineage>
</organism>
<comment type="cofactor">
    <cofactor evidence="1">
        <name>Fe(2+)</name>
        <dbReference type="ChEBI" id="CHEBI:29033"/>
    </cofactor>
    <text evidence="1">Binds 1 Fe(2+) ion per subunit.</text>
</comment>
<comment type="cofactor">
    <cofactor evidence="1">
        <name>L-ascorbate</name>
        <dbReference type="ChEBI" id="CHEBI:38290"/>
    </cofactor>
</comment>
<protein>
    <recommendedName>
        <fullName evidence="1">PKHD-type hydroxylase RPD_3334</fullName>
        <ecNumber evidence="1">1.14.11.-</ecNumber>
    </recommendedName>
</protein>
<keyword id="KW-0223">Dioxygenase</keyword>
<keyword id="KW-0408">Iron</keyword>
<keyword id="KW-0479">Metal-binding</keyword>
<keyword id="KW-0560">Oxidoreductase</keyword>
<keyword id="KW-0847">Vitamin C</keyword>